<organism>
    <name type="scientific">Mus musculus</name>
    <name type="common">Mouse</name>
    <dbReference type="NCBI Taxonomy" id="10090"/>
    <lineage>
        <taxon>Eukaryota</taxon>
        <taxon>Metazoa</taxon>
        <taxon>Chordata</taxon>
        <taxon>Craniata</taxon>
        <taxon>Vertebrata</taxon>
        <taxon>Euteleostomi</taxon>
        <taxon>Mammalia</taxon>
        <taxon>Eutheria</taxon>
        <taxon>Euarchontoglires</taxon>
        <taxon>Glires</taxon>
        <taxon>Rodentia</taxon>
        <taxon>Myomorpha</taxon>
        <taxon>Muroidea</taxon>
        <taxon>Muridae</taxon>
        <taxon>Murinae</taxon>
        <taxon>Mus</taxon>
        <taxon>Mus</taxon>
    </lineage>
</organism>
<gene>
    <name evidence="7 10" type="primary">Ppip5k2</name>
    <name type="synonym">Hisppd1</name>
    <name type="synonym">Kiaa0433</name>
    <name type="synonym">Vip2</name>
</gene>
<accession>Q6ZQB6</accession>
<accession>E9PVE9</accession>
<accession>Q3TM75</accession>
<accession>Q3UUA3</accession>
<accession>Q7TPU4</accession>
<feature type="chain" id="PRO_0000315693" description="Inositol hexakisphosphate and diphosphoinositol-pentakisphosphate kinase 2">
    <location>
        <begin position="1"/>
        <end position="1129"/>
    </location>
</feature>
<feature type="region of interest" description="Polyphosphoinositide-binding domain" evidence="1">
    <location>
        <begin position="377"/>
        <end position="448"/>
    </location>
</feature>
<feature type="region of interest" description="Disordered" evidence="2">
    <location>
        <begin position="904"/>
        <end position="945"/>
    </location>
</feature>
<feature type="region of interest" description="Disordered" evidence="2">
    <location>
        <begin position="1070"/>
        <end position="1129"/>
    </location>
</feature>
<feature type="compositionally biased region" description="Basic and acidic residues" evidence="2">
    <location>
        <begin position="921"/>
        <end position="945"/>
    </location>
</feature>
<feature type="compositionally biased region" description="Low complexity" evidence="2">
    <location>
        <begin position="1081"/>
        <end position="1098"/>
    </location>
</feature>
<feature type="binding site" evidence="1">
    <location>
        <begin position="59"/>
        <end position="60"/>
    </location>
    <ligand>
        <name>substrate</name>
    </ligand>
</feature>
<feature type="binding site" evidence="1">
    <location>
        <position position="140"/>
    </location>
    <ligand>
        <name>ATP</name>
        <dbReference type="ChEBI" id="CHEBI:30616"/>
    </ligand>
</feature>
<feature type="binding site" evidence="1">
    <location>
        <position position="193"/>
    </location>
    <ligand>
        <name>ATP</name>
        <dbReference type="ChEBI" id="CHEBI:30616"/>
    </ligand>
</feature>
<feature type="binding site" evidence="1">
    <location>
        <position position="200"/>
    </location>
    <ligand>
        <name>ATP</name>
        <dbReference type="ChEBI" id="CHEBI:30616"/>
    </ligand>
</feature>
<feature type="binding site" evidence="1">
    <location>
        <begin position="219"/>
        <end position="220"/>
    </location>
    <ligand>
        <name>substrate</name>
    </ligand>
</feature>
<feature type="binding site" evidence="1">
    <location>
        <position position="219"/>
    </location>
    <ligand>
        <name>ATP</name>
        <dbReference type="ChEBI" id="CHEBI:30616"/>
    </ligand>
</feature>
<feature type="binding site" evidence="1">
    <location>
        <begin position="243"/>
        <end position="246"/>
    </location>
    <ligand>
        <name>ATP</name>
        <dbReference type="ChEBI" id="CHEBI:30616"/>
    </ligand>
</feature>
<feature type="binding site" evidence="1">
    <location>
        <begin position="252"/>
        <end position="254"/>
    </location>
    <ligand>
        <name>ATP</name>
        <dbReference type="ChEBI" id="CHEBI:30616"/>
    </ligand>
</feature>
<feature type="binding site" evidence="1">
    <location>
        <position position="254"/>
    </location>
    <ligand>
        <name>substrate</name>
    </ligand>
</feature>
<feature type="binding site" evidence="1">
    <location>
        <position position="268"/>
    </location>
    <ligand>
        <name>substrate</name>
    </ligand>
</feature>
<feature type="binding site" evidence="1">
    <location>
        <position position="270"/>
    </location>
    <ligand>
        <name>ATP</name>
        <dbReference type="ChEBI" id="CHEBI:30616"/>
    </ligand>
</feature>
<feature type="binding site" evidence="1">
    <location>
        <position position="315"/>
    </location>
    <ligand>
        <name>ATP</name>
        <dbReference type="ChEBI" id="CHEBI:30616"/>
    </ligand>
</feature>
<feature type="binding site" evidence="1">
    <location>
        <begin position="327"/>
        <end position="329"/>
    </location>
    <ligand>
        <name>ATP</name>
        <dbReference type="ChEBI" id="CHEBI:30616"/>
    </ligand>
</feature>
<feature type="binding site" evidence="1">
    <location>
        <begin position="332"/>
        <end position="335"/>
    </location>
    <ligand>
        <name>substrate</name>
    </ligand>
</feature>
<feature type="modified residue" description="Phosphoserine" evidence="11">
    <location>
        <position position="44"/>
    </location>
</feature>
<feature type="modified residue" description="Phosphoserine" evidence="1">
    <location>
        <position position="229"/>
    </location>
</feature>
<feature type="modified residue" description="Phosphoserine" evidence="1">
    <location>
        <position position="1051"/>
    </location>
</feature>
<feature type="modified residue" description="Phosphoserine" evidence="1">
    <location>
        <position position="1058"/>
    </location>
</feature>
<feature type="modified residue" description="Phosphoserine" evidence="11">
    <location>
        <position position="1066"/>
    </location>
</feature>
<feature type="modified residue" description="Phosphoserine" evidence="1">
    <location>
        <position position="1106"/>
    </location>
</feature>
<feature type="modified residue" description="Phosphoserine" evidence="1">
    <location>
        <position position="1107"/>
    </location>
</feature>
<feature type="splice variant" id="VSP_041618" description="In isoform 3." evidence="5">
    <location>
        <begin position="1"/>
        <end position="6"/>
    </location>
</feature>
<feature type="splice variant" id="VSP_030637" description="In isoform 2." evidence="6">
    <location>
        <position position="545"/>
    </location>
</feature>
<feature type="splice variant" id="VSP_030638" description="In isoform 2." evidence="6">
    <original>SSMATRSSPGMRRKISLNTYTPTKILPTPPAALKSSKASSKAAAGGPSQAMAPHTSSRKKSINSKTEGHEPKKSTGKKR</original>
    <variation>CMEFTFIVT</variation>
    <location>
        <begin position="1051"/>
        <end position="1129"/>
    </location>
</feature>
<feature type="sequence conflict" description="In Ref. 1; BAE38567." evidence="8" ref="1">
    <original>A</original>
    <variation>V</variation>
    <location>
        <position position="197"/>
    </location>
</feature>
<feature type="sequence conflict" description="In Ref. 4; AAH53396." evidence="8" ref="4">
    <original>A</original>
    <variation>T</variation>
    <location>
        <position position="582"/>
    </location>
</feature>
<feature type="sequence conflict" description="In Ref. 4; AAH53396." evidence="8" ref="4">
    <original>I</original>
    <variation>V</variation>
    <location>
        <position position="729"/>
    </location>
</feature>
<feature type="sequence conflict" description="In Ref. 4; AAH53396." evidence="8" ref="4">
    <original>S</original>
    <variation>P</variation>
    <location>
        <position position="1035"/>
    </location>
</feature>
<feature type="sequence conflict" description="In Ref. 1; BAC97950." evidence="8" ref="1">
    <original>K</original>
    <variation>M</variation>
    <location>
        <position position="1109"/>
    </location>
</feature>
<comment type="function">
    <text evidence="3 4">Bifunctional inositol kinase that acts in concert with the IP6K kinases IP6K1, IP6K2 and IP6K3 to synthesize the diphosphate group-containing inositol pyrophosphates diphosphoinositol pentakisphosphate, PP-InsP5, and bis-diphosphoinositol tetrakisphosphate, (PP)2-InsP4 (PubMed:17690096). PP-InsP5 and (PP)2-InsP4, also respectively called InsP7 and InsP8, regulate a variety of cellular processes, including apoptosis, vesicle trafficking, cytoskeletal dynamics, exocytosis, insulin signaling and neutrophil activation (PubMed:17690096). Phosphorylates inositol hexakisphosphate (InsP6) at position 1 to produce PP-InsP5 which is in turn phosphorylated by IP6Ks to produce (PP)2-InsP4 (PubMed:17690096). Alternatively, phosphorylates PP-InsP5 at position 1, produced by IP6Ks from InsP6, to produce (PP)2-InsP4 (PubMed:17690096). Required for normal hearing (PubMed:29590114).</text>
</comment>
<comment type="catalytic activity">
    <reaction evidence="3">
        <text>1D-myo-inositol hexakisphosphate + ATP = 1-diphospho-1D-myo-inositol 2,3,4,5,6-pentakisphosphate + ADP</text>
        <dbReference type="Rhea" id="RHEA:37459"/>
        <dbReference type="ChEBI" id="CHEBI:30616"/>
        <dbReference type="ChEBI" id="CHEBI:58130"/>
        <dbReference type="ChEBI" id="CHEBI:74946"/>
        <dbReference type="ChEBI" id="CHEBI:456216"/>
        <dbReference type="EC" id="2.7.4.24"/>
    </reaction>
    <physiologicalReaction direction="left-to-right" evidence="9">
        <dbReference type="Rhea" id="RHEA:37460"/>
    </physiologicalReaction>
</comment>
<comment type="catalytic activity">
    <reaction evidence="3">
        <text>5-diphospho-1D-myo-inositol 1,2,3,4,6-pentakisphosphate + ATP + H(+) = 1,5-bis(diphospho)-1D-myo-inositol 2,3,4,6-tetrakisphosphate + ADP</text>
        <dbReference type="Rhea" id="RHEA:10276"/>
        <dbReference type="ChEBI" id="CHEBI:15378"/>
        <dbReference type="ChEBI" id="CHEBI:30616"/>
        <dbReference type="ChEBI" id="CHEBI:58628"/>
        <dbReference type="ChEBI" id="CHEBI:77983"/>
        <dbReference type="ChEBI" id="CHEBI:456216"/>
        <dbReference type="EC" id="2.7.4.24"/>
    </reaction>
    <physiologicalReaction direction="left-to-right" evidence="9">
        <dbReference type="Rhea" id="RHEA:10277"/>
    </physiologicalReaction>
</comment>
<comment type="biophysicochemical properties">
    <kinetics>
        <KM evidence="3">0.23 uM for InsP6</KM>
        <KM evidence="3">0.54 uM for InsP7</KM>
        <Vmax evidence="3">1.7 nmol/min/mg enzyme with InsP6 as substrate</Vmax>
        <Vmax evidence="3">5.23 nmol/min/mg enzyme with InsP7 as substrate</Vmax>
    </kinetics>
</comment>
<comment type="subcellular location">
    <subcellularLocation>
        <location evidence="1">Cytoplasm</location>
        <location evidence="1">Cytosol</location>
    </subcellularLocation>
</comment>
<comment type="alternative products">
    <event type="alternative splicing"/>
    <isoform>
        <id>Q6ZQB6-1</id>
        <name>1</name>
        <sequence type="displayed"/>
    </isoform>
    <isoform>
        <id>Q6ZQB6-2</id>
        <name>2</name>
        <sequence type="described" ref="VSP_030637 VSP_030638"/>
    </isoform>
    <isoform>
        <id>Q6ZQB6-3</id>
        <name>3</name>
        <sequence type="described" ref="VSP_041618"/>
    </isoform>
</comment>
<comment type="tissue specificity">
    <text evidence="4">Ubiquitously expressed (PubMed:29590114). Expressed in the cochlear and vestibular sensory hair cells, supporting cells and spiral ganglion neurons (PubMed:29590114).</text>
</comment>
<comment type="domain">
    <text evidence="1">The C-terminal acid phosphatase-like domain binds PtdIns(3,4,5)P3 and InsP6. Despite its similarity with the phosphatase domain of histidine acid phosphatases, it has no phosphatase activity.</text>
</comment>
<comment type="similarity">
    <text evidence="8">Belongs to the histidine acid phosphatase family. VIP1 subfamily.</text>
</comment>
<comment type="sequence caution" evidence="8">
    <conflict type="erroneous initiation">
        <sequence resource="EMBL-CDS" id="BAC97950"/>
    </conflict>
    <text>Extended N-terminus.</text>
</comment>
<dbReference type="EC" id="2.7.4.24" evidence="3"/>
<dbReference type="EMBL" id="AK129140">
    <property type="protein sequence ID" value="BAC97950.1"/>
    <property type="status" value="ALT_INIT"/>
    <property type="molecule type" value="mRNA"/>
</dbReference>
<dbReference type="EMBL" id="AK138622">
    <property type="protein sequence ID" value="BAE23724.1"/>
    <property type="molecule type" value="mRNA"/>
</dbReference>
<dbReference type="EMBL" id="AK166095">
    <property type="protein sequence ID" value="BAE38567.1"/>
    <property type="molecule type" value="mRNA"/>
</dbReference>
<dbReference type="EMBL" id="AC099860">
    <property type="status" value="NOT_ANNOTATED_CDS"/>
    <property type="molecule type" value="Genomic_DNA"/>
</dbReference>
<dbReference type="EMBL" id="AC162298">
    <property type="status" value="NOT_ANNOTATED_CDS"/>
    <property type="molecule type" value="Genomic_DNA"/>
</dbReference>
<dbReference type="EMBL" id="BC053396">
    <property type="protein sequence ID" value="AAH53396.1"/>
    <property type="molecule type" value="mRNA"/>
</dbReference>
<dbReference type="CCDS" id="CCDS35678.2">
    <molecule id="Q6ZQB6-1"/>
</dbReference>
<dbReference type="RefSeq" id="NP_001392398.1">
    <molecule id="Q6ZQB6-1"/>
    <property type="nucleotide sequence ID" value="NM_001405469.1"/>
</dbReference>
<dbReference type="RefSeq" id="NP_776121.4">
    <molecule id="Q6ZQB6-1"/>
    <property type="nucleotide sequence ID" value="NM_173760.5"/>
</dbReference>
<dbReference type="SMR" id="Q6ZQB6"/>
<dbReference type="BioGRID" id="230626">
    <property type="interactions" value="1"/>
</dbReference>
<dbReference type="FunCoup" id="Q6ZQB6">
    <property type="interactions" value="2437"/>
</dbReference>
<dbReference type="IntAct" id="Q6ZQB6">
    <property type="interactions" value="1"/>
</dbReference>
<dbReference type="STRING" id="10090.ENSMUSP00000043401"/>
<dbReference type="GlyGen" id="Q6ZQB6">
    <property type="glycosylation" value="1 site"/>
</dbReference>
<dbReference type="iPTMnet" id="Q6ZQB6"/>
<dbReference type="PhosphoSitePlus" id="Q6ZQB6"/>
<dbReference type="SwissPalm" id="Q6ZQB6"/>
<dbReference type="jPOST" id="Q6ZQB6"/>
<dbReference type="PaxDb" id="10090-ENSMUSP00000108466"/>
<dbReference type="PeptideAtlas" id="Q6ZQB6"/>
<dbReference type="ProteomicsDB" id="297919">
    <molecule id="Q6ZQB6-1"/>
</dbReference>
<dbReference type="ProteomicsDB" id="297920">
    <molecule id="Q6ZQB6-2"/>
</dbReference>
<dbReference type="ProteomicsDB" id="297921">
    <molecule id="Q6ZQB6-3"/>
</dbReference>
<dbReference type="Pumba" id="Q6ZQB6"/>
<dbReference type="Antibodypedia" id="44750">
    <property type="antibodies" value="74 antibodies from 20 providers"/>
</dbReference>
<dbReference type="Ensembl" id="ENSMUST00000042509.13">
    <molecule id="Q6ZQB6-1"/>
    <property type="protein sequence ID" value="ENSMUSP00000043401.8"/>
    <property type="gene ID" value="ENSMUSG00000040648.16"/>
</dbReference>
<dbReference type="Ensembl" id="ENSMUST00000171129.8">
    <molecule id="Q6ZQB6-3"/>
    <property type="protein sequence ID" value="ENSMUSP00000132889.2"/>
    <property type="gene ID" value="ENSMUSG00000040648.16"/>
</dbReference>
<dbReference type="GeneID" id="227399"/>
<dbReference type="KEGG" id="mmu:227399"/>
<dbReference type="UCSC" id="uc007cfk.4">
    <molecule id="Q6ZQB6-1"/>
    <property type="organism name" value="mouse"/>
</dbReference>
<dbReference type="UCSC" id="uc007cfl.1">
    <molecule id="Q6ZQB6-2"/>
    <property type="organism name" value="mouse"/>
</dbReference>
<dbReference type="AGR" id="MGI:2142810"/>
<dbReference type="CTD" id="23262"/>
<dbReference type="MGI" id="MGI:2142810">
    <property type="gene designation" value="Ppip5k2"/>
</dbReference>
<dbReference type="VEuPathDB" id="HostDB:ENSMUSG00000040648"/>
<dbReference type="eggNOG" id="KOG1057">
    <property type="taxonomic scope" value="Eukaryota"/>
</dbReference>
<dbReference type="GeneTree" id="ENSGT00390000009048"/>
<dbReference type="HOGENOM" id="CLU_000914_0_0_1"/>
<dbReference type="InParanoid" id="Q6ZQB6"/>
<dbReference type="OMA" id="IQERWCC"/>
<dbReference type="BRENDA" id="2.7.4.21">
    <property type="organism ID" value="3474"/>
</dbReference>
<dbReference type="BRENDA" id="2.7.4.24">
    <property type="organism ID" value="3474"/>
</dbReference>
<dbReference type="Reactome" id="R-MMU-1855167">
    <property type="pathway name" value="Synthesis of pyrophosphates in the cytosol"/>
</dbReference>
<dbReference type="SABIO-RK" id="Q6ZQB6"/>
<dbReference type="BioGRID-ORCS" id="227399">
    <property type="hits" value="5 hits in 59 CRISPR screens"/>
</dbReference>
<dbReference type="PRO" id="PR:Q6ZQB6"/>
<dbReference type="Proteomes" id="UP000000589">
    <property type="component" value="Chromosome 1"/>
</dbReference>
<dbReference type="RNAct" id="Q6ZQB6">
    <property type="molecule type" value="protein"/>
</dbReference>
<dbReference type="Bgee" id="ENSMUSG00000040648">
    <property type="expression patterns" value="Expressed in manus and 259 other cell types or tissues"/>
</dbReference>
<dbReference type="ExpressionAtlas" id="Q6ZQB6">
    <property type="expression patterns" value="baseline and differential"/>
</dbReference>
<dbReference type="GO" id="GO:0005829">
    <property type="term" value="C:cytosol"/>
    <property type="evidence" value="ECO:0000250"/>
    <property type="project" value="UniProtKB"/>
</dbReference>
<dbReference type="GO" id="GO:0033857">
    <property type="term" value="F:5-diphosphoinositol pentakisphosphate 1-kinase activity"/>
    <property type="evidence" value="ECO:0000314"/>
    <property type="project" value="MGI"/>
</dbReference>
<dbReference type="GO" id="GO:0005524">
    <property type="term" value="F:ATP binding"/>
    <property type="evidence" value="ECO:0000250"/>
    <property type="project" value="UniProtKB"/>
</dbReference>
<dbReference type="GO" id="GO:0052723">
    <property type="term" value="F:inositol hexakisphosphate 1-kinase activity"/>
    <property type="evidence" value="ECO:0007669"/>
    <property type="project" value="RHEA"/>
</dbReference>
<dbReference type="GO" id="GO:0000832">
    <property type="term" value="F:inositol hexakisphosphate 5-kinase activity"/>
    <property type="evidence" value="ECO:0000250"/>
    <property type="project" value="UniProtKB"/>
</dbReference>
<dbReference type="GO" id="GO:0000828">
    <property type="term" value="F:inositol hexakisphosphate kinase activity"/>
    <property type="evidence" value="ECO:0000314"/>
    <property type="project" value="MGI"/>
</dbReference>
<dbReference type="GO" id="GO:0000827">
    <property type="term" value="F:inositol-1,3,4,5,6-pentakisphosphate kinase activity"/>
    <property type="evidence" value="ECO:0000250"/>
    <property type="project" value="UniProtKB"/>
</dbReference>
<dbReference type="GO" id="GO:0006020">
    <property type="term" value="P:inositol metabolic process"/>
    <property type="evidence" value="ECO:0000250"/>
    <property type="project" value="UniProtKB"/>
</dbReference>
<dbReference type="GO" id="GO:0007605">
    <property type="term" value="P:sensory perception of sound"/>
    <property type="evidence" value="ECO:0007669"/>
    <property type="project" value="UniProtKB-KW"/>
</dbReference>
<dbReference type="CDD" id="cd07061">
    <property type="entry name" value="HP_HAP_like"/>
    <property type="match status" value="1"/>
</dbReference>
<dbReference type="FunFam" id="3.30.470.20:FF:000003">
    <property type="entry name" value="Inositol hexakisphosphate and diphosphoinositol-pentakisphosphate kinase"/>
    <property type="match status" value="1"/>
</dbReference>
<dbReference type="FunFam" id="3.40.50.11950:FF:000001">
    <property type="entry name" value="Inositol hexakisphosphate and diphosphoinositol-pentakisphosphate kinase"/>
    <property type="match status" value="1"/>
</dbReference>
<dbReference type="FunFam" id="3.40.50.11950:FF:000003">
    <property type="entry name" value="Inositol hexakisphosphate and diphosphoinositol-pentakisphosphate kinase"/>
    <property type="match status" value="1"/>
</dbReference>
<dbReference type="FunFam" id="3.40.50.1240:FF:000013">
    <property type="entry name" value="Inositol hexakisphosphate and diphosphoinositol-pentakisphosphate kinase"/>
    <property type="match status" value="1"/>
</dbReference>
<dbReference type="Gene3D" id="3.40.50.11950">
    <property type="match status" value="1"/>
</dbReference>
<dbReference type="Gene3D" id="3.30.470.20">
    <property type="entry name" value="ATP-grasp fold, B domain"/>
    <property type="match status" value="1"/>
</dbReference>
<dbReference type="Gene3D" id="3.40.50.1240">
    <property type="entry name" value="Phosphoglycerate mutase-like"/>
    <property type="match status" value="1"/>
</dbReference>
<dbReference type="InterPro" id="IPR033379">
    <property type="entry name" value="Acid_Pase_AS"/>
</dbReference>
<dbReference type="InterPro" id="IPR000560">
    <property type="entry name" value="His_Pase_clade-2"/>
</dbReference>
<dbReference type="InterPro" id="IPR037446">
    <property type="entry name" value="His_Pase_VIP1"/>
</dbReference>
<dbReference type="InterPro" id="IPR029033">
    <property type="entry name" value="His_PPase_superfam"/>
</dbReference>
<dbReference type="InterPro" id="IPR040557">
    <property type="entry name" value="VIP1_N"/>
</dbReference>
<dbReference type="PANTHER" id="PTHR12750">
    <property type="entry name" value="DIPHOSPHOINOSITOL PENTAKISPHOSPHATE KINASE"/>
    <property type="match status" value="1"/>
</dbReference>
<dbReference type="PANTHER" id="PTHR12750:SF10">
    <property type="entry name" value="INOSITOL HEXAKISPHOSPHATE AND DIPHOSPHOINOSITOL-PENTAKISPHOSPHATE KINASE 2"/>
    <property type="match status" value="1"/>
</dbReference>
<dbReference type="Pfam" id="PF00328">
    <property type="entry name" value="His_Phos_2"/>
    <property type="match status" value="1"/>
</dbReference>
<dbReference type="Pfam" id="PF18086">
    <property type="entry name" value="PPIP5K2_N"/>
    <property type="match status" value="1"/>
</dbReference>
<dbReference type="SUPFAM" id="SSF56059">
    <property type="entry name" value="Glutathione synthetase ATP-binding domain-like"/>
    <property type="match status" value="1"/>
</dbReference>
<dbReference type="SUPFAM" id="SSF53254">
    <property type="entry name" value="Phosphoglycerate mutase-like"/>
    <property type="match status" value="1"/>
</dbReference>
<dbReference type="PROSITE" id="PS00616">
    <property type="entry name" value="HIS_ACID_PHOSPHAT_1"/>
    <property type="match status" value="1"/>
</dbReference>
<evidence type="ECO:0000250" key="1">
    <source>
        <dbReference type="UniProtKB" id="O43314"/>
    </source>
</evidence>
<evidence type="ECO:0000256" key="2">
    <source>
        <dbReference type="SAM" id="MobiDB-lite"/>
    </source>
</evidence>
<evidence type="ECO:0000269" key="3">
    <source>
    </source>
</evidence>
<evidence type="ECO:0000269" key="4">
    <source>
    </source>
</evidence>
<evidence type="ECO:0000303" key="5">
    <source>
    </source>
</evidence>
<evidence type="ECO:0000303" key="6">
    <source>
    </source>
</evidence>
<evidence type="ECO:0000303" key="7">
    <source>
    </source>
</evidence>
<evidence type="ECO:0000305" key="8"/>
<evidence type="ECO:0000305" key="9">
    <source>
    </source>
</evidence>
<evidence type="ECO:0000312" key="10">
    <source>
        <dbReference type="MGI" id="MGI:2142810"/>
    </source>
</evidence>
<evidence type="ECO:0007744" key="11">
    <source>
    </source>
</evidence>
<proteinExistence type="evidence at protein level"/>
<sequence>MSNSRKMSEPPRFFVGPEDAEINPGNYRRFFHHAEEEEEEEDESPPERQIVVGICSMAKKSKSKPMKEILERISLFKYITVVVFEEEIILNEPVENWPLCDCLISFHSKGFPLDKAVAYAKLRNPFVINDLNMQYLIQDRRDVYSILQAEGILLPRYAILNRDPNNPKECNLIEGEDHVEVNGEVFQKPFVEKPVSAEDHNVYIYYPTSAGGGSQRLFRKIGSRSSVYSPESNVRKTGSYIYEEFMPTDGTDVKVYTVGPDYAHAEARKSPALDGKVERDSEGKEVRYPVILNAREKLIAWKVCLAFKQTVCGFDLLRANGQSYVCDVNGFSFVKNSMKYYDDCAKILGNIVMRELAPQFHIPWSIPLEAEDIPIVPTTSGTMMELRCVIAVIRHGDRTPKQKMKMEVRHQKFFDLFEKCDGYKSGKLKLKKPKQLQEVLDIARQLLMELGQNNDSEIEENKSKLEQLKTVLEMYGHFSGINRKVQLTYLPHGCPKTSSEEEDNRREEPSLLLVLKWGGELTPAGRVQAEELGRAFRCMYPGGQGDYAGFPGCGLLRLHSTYRHDLKIYASDEGRVQMTAAAFAKGLLALEGELTPILVQMVKSANMNGLLDSDSDSLSSCQQRVKARLHEILQKDRDFTAEDYEKLTPSGSISVIKSMHLIKNPVKTCDKVYSLIQSLTSQIRYRMEDPKSADIQLYHSETLELMLRRWSKLEKDFKTKNGRYDISKIPDIYDCIKYDVQHNGSLKLENTMELYRLSKALADIVIPQEYGITKAEKLEIAKGYCTPLVRKIRSDLQRTQDDDTVNKLHPVYSRGVLSPERHVRTRLYFTSESHVHSLLSILRYGALCDDSKDEQWKRAMDYLNVVNELNYMTQIVIMLYEDPNKDLSSEERFHVELHFSPGAKGCEEDKNLPSGYGYRPASRENEGRRSLKTDDDEPHTSKRDEVDRAVMLFKPLVSEPIHIHRKSPLPRSRKITANEVVSENANYLRTPRNLVEQKQNPTVGFELYSMVPSICPLETLHNALFLKQVDDFLASIASPSTEVLRKVPEMSSMATRSSPGMRRKISLNTYTPTKILPTPPAALKSSKASSKAAAGGPSQAMAPHTSSRKKSINSKTEGHEPKKSTGKKR</sequence>
<reference key="1">
    <citation type="journal article" date="2003" name="DNA Res.">
        <title>Prediction of the coding sequences of mouse homologues of KIAA gene: III. The complete nucleotide sequences of 500 mouse KIAA-homologous cDNAs identified by screening of terminal sequences of cDNA clones randomly sampled from size-fractionated libraries.</title>
        <authorList>
            <person name="Okazaki N."/>
            <person name="Kikuno R."/>
            <person name="Ohara R."/>
            <person name="Inamoto S."/>
            <person name="Koseki H."/>
            <person name="Hiraoka S."/>
            <person name="Saga Y."/>
            <person name="Nagase T."/>
            <person name="Ohara O."/>
            <person name="Koga H."/>
        </authorList>
    </citation>
    <scope>NUCLEOTIDE SEQUENCE [LARGE SCALE MRNA] (ISOFORM 1)</scope>
    <source>
        <tissue>Embryonic tail</tissue>
    </source>
</reference>
<reference key="2">
    <citation type="journal article" date="2005" name="Science">
        <title>The transcriptional landscape of the mammalian genome.</title>
        <authorList>
            <person name="Carninci P."/>
            <person name="Kasukawa T."/>
            <person name="Katayama S."/>
            <person name="Gough J."/>
            <person name="Frith M.C."/>
            <person name="Maeda N."/>
            <person name="Oyama R."/>
            <person name="Ravasi T."/>
            <person name="Lenhard B."/>
            <person name="Wells C."/>
            <person name="Kodzius R."/>
            <person name="Shimokawa K."/>
            <person name="Bajic V.B."/>
            <person name="Brenner S.E."/>
            <person name="Batalov S."/>
            <person name="Forrest A.R."/>
            <person name="Zavolan M."/>
            <person name="Davis M.J."/>
            <person name="Wilming L.G."/>
            <person name="Aidinis V."/>
            <person name="Allen J.E."/>
            <person name="Ambesi-Impiombato A."/>
            <person name="Apweiler R."/>
            <person name="Aturaliya R.N."/>
            <person name="Bailey T.L."/>
            <person name="Bansal M."/>
            <person name="Baxter L."/>
            <person name="Beisel K.W."/>
            <person name="Bersano T."/>
            <person name="Bono H."/>
            <person name="Chalk A.M."/>
            <person name="Chiu K.P."/>
            <person name="Choudhary V."/>
            <person name="Christoffels A."/>
            <person name="Clutterbuck D.R."/>
            <person name="Crowe M.L."/>
            <person name="Dalla E."/>
            <person name="Dalrymple B.P."/>
            <person name="de Bono B."/>
            <person name="Della Gatta G."/>
            <person name="di Bernardo D."/>
            <person name="Down T."/>
            <person name="Engstrom P."/>
            <person name="Fagiolini M."/>
            <person name="Faulkner G."/>
            <person name="Fletcher C.F."/>
            <person name="Fukushima T."/>
            <person name="Furuno M."/>
            <person name="Futaki S."/>
            <person name="Gariboldi M."/>
            <person name="Georgii-Hemming P."/>
            <person name="Gingeras T.R."/>
            <person name="Gojobori T."/>
            <person name="Green R.E."/>
            <person name="Gustincich S."/>
            <person name="Harbers M."/>
            <person name="Hayashi Y."/>
            <person name="Hensch T.K."/>
            <person name="Hirokawa N."/>
            <person name="Hill D."/>
            <person name="Huminiecki L."/>
            <person name="Iacono M."/>
            <person name="Ikeo K."/>
            <person name="Iwama A."/>
            <person name="Ishikawa T."/>
            <person name="Jakt M."/>
            <person name="Kanapin A."/>
            <person name="Katoh M."/>
            <person name="Kawasawa Y."/>
            <person name="Kelso J."/>
            <person name="Kitamura H."/>
            <person name="Kitano H."/>
            <person name="Kollias G."/>
            <person name="Krishnan S.P."/>
            <person name="Kruger A."/>
            <person name="Kummerfeld S.K."/>
            <person name="Kurochkin I.V."/>
            <person name="Lareau L.F."/>
            <person name="Lazarevic D."/>
            <person name="Lipovich L."/>
            <person name="Liu J."/>
            <person name="Liuni S."/>
            <person name="McWilliam S."/>
            <person name="Madan Babu M."/>
            <person name="Madera M."/>
            <person name="Marchionni L."/>
            <person name="Matsuda H."/>
            <person name="Matsuzawa S."/>
            <person name="Miki H."/>
            <person name="Mignone F."/>
            <person name="Miyake S."/>
            <person name="Morris K."/>
            <person name="Mottagui-Tabar S."/>
            <person name="Mulder N."/>
            <person name="Nakano N."/>
            <person name="Nakauchi H."/>
            <person name="Ng P."/>
            <person name="Nilsson R."/>
            <person name="Nishiguchi S."/>
            <person name="Nishikawa S."/>
            <person name="Nori F."/>
            <person name="Ohara O."/>
            <person name="Okazaki Y."/>
            <person name="Orlando V."/>
            <person name="Pang K.C."/>
            <person name="Pavan W.J."/>
            <person name="Pavesi G."/>
            <person name="Pesole G."/>
            <person name="Petrovsky N."/>
            <person name="Piazza S."/>
            <person name="Reed J."/>
            <person name="Reid J.F."/>
            <person name="Ring B.Z."/>
            <person name="Ringwald M."/>
            <person name="Rost B."/>
            <person name="Ruan Y."/>
            <person name="Salzberg S.L."/>
            <person name="Sandelin A."/>
            <person name="Schneider C."/>
            <person name="Schoenbach C."/>
            <person name="Sekiguchi K."/>
            <person name="Semple C.A."/>
            <person name="Seno S."/>
            <person name="Sessa L."/>
            <person name="Sheng Y."/>
            <person name="Shibata Y."/>
            <person name="Shimada H."/>
            <person name="Shimada K."/>
            <person name="Silva D."/>
            <person name="Sinclair B."/>
            <person name="Sperling S."/>
            <person name="Stupka E."/>
            <person name="Sugiura K."/>
            <person name="Sultana R."/>
            <person name="Takenaka Y."/>
            <person name="Taki K."/>
            <person name="Tammoja K."/>
            <person name="Tan S.L."/>
            <person name="Tang S."/>
            <person name="Taylor M.S."/>
            <person name="Tegner J."/>
            <person name="Teichmann S.A."/>
            <person name="Ueda H.R."/>
            <person name="van Nimwegen E."/>
            <person name="Verardo R."/>
            <person name="Wei C.L."/>
            <person name="Yagi K."/>
            <person name="Yamanishi H."/>
            <person name="Zabarovsky E."/>
            <person name="Zhu S."/>
            <person name="Zimmer A."/>
            <person name="Hide W."/>
            <person name="Bult C."/>
            <person name="Grimmond S.M."/>
            <person name="Teasdale R.D."/>
            <person name="Liu E.T."/>
            <person name="Brusic V."/>
            <person name="Quackenbush J."/>
            <person name="Wahlestedt C."/>
            <person name="Mattick J.S."/>
            <person name="Hume D.A."/>
            <person name="Kai C."/>
            <person name="Sasaki D."/>
            <person name="Tomaru Y."/>
            <person name="Fukuda S."/>
            <person name="Kanamori-Katayama M."/>
            <person name="Suzuki M."/>
            <person name="Aoki J."/>
            <person name="Arakawa T."/>
            <person name="Iida J."/>
            <person name="Imamura K."/>
            <person name="Itoh M."/>
            <person name="Kato T."/>
            <person name="Kawaji H."/>
            <person name="Kawagashira N."/>
            <person name="Kawashima T."/>
            <person name="Kojima M."/>
            <person name="Kondo S."/>
            <person name="Konno H."/>
            <person name="Nakano K."/>
            <person name="Ninomiya N."/>
            <person name="Nishio T."/>
            <person name="Okada M."/>
            <person name="Plessy C."/>
            <person name="Shibata K."/>
            <person name="Shiraki T."/>
            <person name="Suzuki S."/>
            <person name="Tagami M."/>
            <person name="Waki K."/>
            <person name="Watahiki A."/>
            <person name="Okamura-Oho Y."/>
            <person name="Suzuki H."/>
            <person name="Kawai J."/>
            <person name="Hayashizaki Y."/>
        </authorList>
    </citation>
    <scope>NUCLEOTIDE SEQUENCE [LARGE SCALE MRNA] (ISOFORM 2)</scope>
    <source>
        <strain>C57BL/6J</strain>
        <tissue>Lung</tissue>
        <tissue>Spinal cord</tissue>
    </source>
</reference>
<reference key="3">
    <citation type="journal article" date="2009" name="PLoS Biol.">
        <title>Lineage-specific biology revealed by a finished genome assembly of the mouse.</title>
        <authorList>
            <person name="Church D.M."/>
            <person name="Goodstadt L."/>
            <person name="Hillier L.W."/>
            <person name="Zody M.C."/>
            <person name="Goldstein S."/>
            <person name="She X."/>
            <person name="Bult C.J."/>
            <person name="Agarwala R."/>
            <person name="Cherry J.L."/>
            <person name="DiCuccio M."/>
            <person name="Hlavina W."/>
            <person name="Kapustin Y."/>
            <person name="Meric P."/>
            <person name="Maglott D."/>
            <person name="Birtle Z."/>
            <person name="Marques A.C."/>
            <person name="Graves T."/>
            <person name="Zhou S."/>
            <person name="Teague B."/>
            <person name="Potamousis K."/>
            <person name="Churas C."/>
            <person name="Place M."/>
            <person name="Herschleb J."/>
            <person name="Runnheim R."/>
            <person name="Forrest D."/>
            <person name="Amos-Landgraf J."/>
            <person name="Schwartz D.C."/>
            <person name="Cheng Z."/>
            <person name="Lindblad-Toh K."/>
            <person name="Eichler E.E."/>
            <person name="Ponting C.P."/>
        </authorList>
    </citation>
    <scope>NUCLEOTIDE SEQUENCE [LARGE SCALE GENOMIC DNA]</scope>
    <source>
        <strain>C57BL/6J</strain>
    </source>
</reference>
<reference key="4">
    <citation type="journal article" date="2004" name="Genome Res.">
        <title>The status, quality, and expansion of the NIH full-length cDNA project: the Mammalian Gene Collection (MGC).</title>
        <authorList>
            <consortium name="The MGC Project Team"/>
        </authorList>
    </citation>
    <scope>NUCLEOTIDE SEQUENCE [LARGE SCALE MRNA] (ISOFORM 3)</scope>
    <source>
        <strain>C57BL/6J</strain>
        <tissue>Egg</tissue>
    </source>
</reference>
<reference key="5">
    <citation type="journal article" date="2007" name="J. Biol. Chem.">
        <title>Cloning and characterization of two human VIP1-like inositol hexakisphosphate and diphosphoinositol pentakisphosphate kinases.</title>
        <authorList>
            <person name="Fridy P.C."/>
            <person name="Otto J.C."/>
            <person name="Dollins D.E."/>
            <person name="York J.D."/>
        </authorList>
    </citation>
    <scope>FUNCTION</scope>
    <scope>ENZYME ACTIVITY</scope>
    <scope>BIOPHYSICOCHEMICAL PROPERTIES</scope>
</reference>
<reference key="6">
    <citation type="journal article" date="2009" name="Immunity">
        <title>The phagosomal proteome in interferon-gamma-activated macrophages.</title>
        <authorList>
            <person name="Trost M."/>
            <person name="English L."/>
            <person name="Lemieux S."/>
            <person name="Courcelles M."/>
            <person name="Desjardins M."/>
            <person name="Thibault P."/>
        </authorList>
    </citation>
    <scope>IDENTIFICATION BY MASS SPECTROMETRY [LARGE SCALE ANALYSIS]</scope>
</reference>
<reference key="7">
    <citation type="journal article" date="2010" name="Cell">
        <title>A tissue-specific atlas of mouse protein phosphorylation and expression.</title>
        <authorList>
            <person name="Huttlin E.L."/>
            <person name="Jedrychowski M.P."/>
            <person name="Elias J.E."/>
            <person name="Goswami T."/>
            <person name="Rad R."/>
            <person name="Beausoleil S.A."/>
            <person name="Villen J."/>
            <person name="Haas W."/>
            <person name="Sowa M.E."/>
            <person name="Gygi S.P."/>
        </authorList>
    </citation>
    <scope>PHOSPHORYLATION [LARGE SCALE ANALYSIS] AT SER-44 AND SER-1066</scope>
    <scope>IDENTIFICATION BY MASS SPECTROMETRY [LARGE SCALE ANALYSIS]</scope>
    <source>
        <tissue>Brown adipose tissue</tissue>
        <tissue>Heart</tissue>
        <tissue>Liver</tissue>
        <tissue>Lung</tissue>
        <tissue>Pancreas</tissue>
        <tissue>Spleen</tissue>
        <tissue>Testis</tissue>
    </source>
</reference>
<reference key="8">
    <citation type="journal article" date="2018" name="PLoS Genet.">
        <title>Mutations in Diphosphoinositol-Pentakisphosphate Kinase PPIP5K2 are associated with hearing loss in human and mouse.</title>
        <authorList>
            <person name="Yousaf R."/>
            <person name="Gu C."/>
            <person name="Ahmed Z.M."/>
            <person name="Khan S.N."/>
            <person name="Friedman T.B."/>
            <person name="Riazuddin S."/>
            <person name="Shears S.B."/>
            <person name="Riazuddin S."/>
        </authorList>
    </citation>
    <scope>FUNCTION</scope>
    <scope>TISSUE SPECIFICITY</scope>
</reference>
<protein>
    <recommendedName>
        <fullName evidence="8">Inositol hexakisphosphate and diphosphoinositol-pentakisphosphate kinase 2</fullName>
        <ecNumber evidence="3">2.7.4.24</ecNumber>
    </recommendedName>
    <alternativeName>
        <fullName>Diphosphoinositol pentakisphosphate kinase 2</fullName>
    </alternativeName>
    <alternativeName>
        <fullName>Histidine acid phosphatase domain-containing protein 1</fullName>
    </alternativeName>
    <alternativeName>
        <fullName>InsP6 and PP-IP5 kinase 2</fullName>
    </alternativeName>
    <alternativeName>
        <fullName>VIP1 homolog 2</fullName>
        <shortName>mmVIP2</shortName>
    </alternativeName>
</protein>
<keyword id="KW-0025">Alternative splicing</keyword>
<keyword id="KW-0067">ATP-binding</keyword>
<keyword id="KW-0963">Cytoplasm</keyword>
<keyword id="KW-1009">Hearing</keyword>
<keyword id="KW-0418">Kinase</keyword>
<keyword id="KW-0547">Nucleotide-binding</keyword>
<keyword id="KW-0597">Phosphoprotein</keyword>
<keyword id="KW-1185">Reference proteome</keyword>
<keyword id="KW-0808">Transferase</keyword>
<name>VIP2_MOUSE</name>